<reference key="1">
    <citation type="journal article" date="2008" name="Genome Biol.">
        <title>The complete genome, comparative and functional analysis of Stenotrophomonas maltophilia reveals an organism heavily shielded by drug resistance determinants.</title>
        <authorList>
            <person name="Crossman L.C."/>
            <person name="Gould V.C."/>
            <person name="Dow J.M."/>
            <person name="Vernikos G.S."/>
            <person name="Okazaki A."/>
            <person name="Sebaihia M."/>
            <person name="Saunders D."/>
            <person name="Arrowsmith C."/>
            <person name="Carver T."/>
            <person name="Peters N."/>
            <person name="Adlem E."/>
            <person name="Kerhornou A."/>
            <person name="Lord A."/>
            <person name="Murphy L."/>
            <person name="Seeger K."/>
            <person name="Squares R."/>
            <person name="Rutter S."/>
            <person name="Quail M.A."/>
            <person name="Rajandream M.A."/>
            <person name="Harris D."/>
            <person name="Churcher C."/>
            <person name="Bentley S.D."/>
            <person name="Parkhill J."/>
            <person name="Thomson N.R."/>
            <person name="Avison M.B."/>
        </authorList>
    </citation>
    <scope>NUCLEOTIDE SEQUENCE [LARGE SCALE GENOMIC DNA]</scope>
    <source>
        <strain>K279a</strain>
    </source>
</reference>
<sequence length="612" mass="64970">MPEYRSRTSTAGRNMAGARALWRATGMKDGDFHKPIIAIANSFTQFVPGHVHLKDLGQLVAREIEQVGGVAKEFNTIAVDDGIAMGHDGMLYSLPSREIIADAVEYMVNAHCADALVCISNCDKITPGMLMAALRLNIPVVFVSGGPMEAGKTKLSEHKLDLVDAMVVAADDSASDEKVAAFERSACPTCGSCSGMFTANSMNCLTEALGLSLPGNGTTLATHADREALFRRAGRLIVELCHRWYGGEDPSALPRGIATQAAFANAMTLDIAMGGSTNTILHLLAAAQEAEVDFDLTHIDALSRRVPQLCKVAPNTPKYHIEDVHRAGGVFGILGELDRAGLLETTVPTVHSASLADALERWDVVRSDNDTLHTFFKAGPAGIPTQEAFSQATRWPTLDVDRAEGCIRSLQHAYSLEGGLAVLRGNLAVDGCVVKTAGVDESIHVFEGPARVYESQDAAVAGILADEVQPGEVVVIRYEGPKGGPGMQEMLYPTSYLKSKGLGKQCALLTDGRFSGGTSGLSIGHVSPEAASGGVIGLVEDGDRIRIDIPARRIDLLLDEAVLAQRRSDADARGWKPRAPRPRKVTSALKAYALLATSADKGAVRNTALLGD</sequence>
<keyword id="KW-0001">2Fe-2S</keyword>
<keyword id="KW-0028">Amino-acid biosynthesis</keyword>
<keyword id="KW-0100">Branched-chain amino acid biosynthesis</keyword>
<keyword id="KW-0408">Iron</keyword>
<keyword id="KW-0411">Iron-sulfur</keyword>
<keyword id="KW-0456">Lyase</keyword>
<keyword id="KW-0460">Magnesium</keyword>
<keyword id="KW-0479">Metal-binding</keyword>
<keyword id="KW-1185">Reference proteome</keyword>
<organism>
    <name type="scientific">Stenotrophomonas maltophilia (strain K279a)</name>
    <dbReference type="NCBI Taxonomy" id="522373"/>
    <lineage>
        <taxon>Bacteria</taxon>
        <taxon>Pseudomonadati</taxon>
        <taxon>Pseudomonadota</taxon>
        <taxon>Gammaproteobacteria</taxon>
        <taxon>Lysobacterales</taxon>
        <taxon>Lysobacteraceae</taxon>
        <taxon>Stenotrophomonas</taxon>
        <taxon>Stenotrophomonas maltophilia group</taxon>
    </lineage>
</organism>
<comment type="function">
    <text evidence="1">Functions in the biosynthesis of branched-chain amino acids. Catalyzes the dehydration of (2R,3R)-2,3-dihydroxy-3-methylpentanoate (2,3-dihydroxy-3-methylvalerate) into 2-oxo-3-methylpentanoate (2-oxo-3-methylvalerate) and of (2R)-2,3-dihydroxy-3-methylbutanoate (2,3-dihydroxyisovalerate) into 2-oxo-3-methylbutanoate (2-oxoisovalerate), the penultimate precursor to L-isoleucine and L-valine, respectively.</text>
</comment>
<comment type="catalytic activity">
    <reaction evidence="1">
        <text>(2R)-2,3-dihydroxy-3-methylbutanoate = 3-methyl-2-oxobutanoate + H2O</text>
        <dbReference type="Rhea" id="RHEA:24809"/>
        <dbReference type="ChEBI" id="CHEBI:11851"/>
        <dbReference type="ChEBI" id="CHEBI:15377"/>
        <dbReference type="ChEBI" id="CHEBI:49072"/>
        <dbReference type="EC" id="4.2.1.9"/>
    </reaction>
    <physiologicalReaction direction="left-to-right" evidence="1">
        <dbReference type="Rhea" id="RHEA:24810"/>
    </physiologicalReaction>
</comment>
<comment type="catalytic activity">
    <reaction evidence="1">
        <text>(2R,3R)-2,3-dihydroxy-3-methylpentanoate = (S)-3-methyl-2-oxopentanoate + H2O</text>
        <dbReference type="Rhea" id="RHEA:27694"/>
        <dbReference type="ChEBI" id="CHEBI:15377"/>
        <dbReference type="ChEBI" id="CHEBI:35146"/>
        <dbReference type="ChEBI" id="CHEBI:49258"/>
        <dbReference type="EC" id="4.2.1.9"/>
    </reaction>
    <physiologicalReaction direction="left-to-right" evidence="1">
        <dbReference type="Rhea" id="RHEA:27695"/>
    </physiologicalReaction>
</comment>
<comment type="cofactor">
    <cofactor evidence="1">
        <name>[2Fe-2S] cluster</name>
        <dbReference type="ChEBI" id="CHEBI:190135"/>
    </cofactor>
    <text evidence="1">Binds 1 [2Fe-2S] cluster per subunit. This cluster acts as a Lewis acid cofactor.</text>
</comment>
<comment type="cofactor">
    <cofactor evidence="1">
        <name>Mg(2+)</name>
        <dbReference type="ChEBI" id="CHEBI:18420"/>
    </cofactor>
</comment>
<comment type="pathway">
    <text evidence="1">Amino-acid biosynthesis; L-isoleucine biosynthesis; L-isoleucine from 2-oxobutanoate: step 3/4.</text>
</comment>
<comment type="pathway">
    <text evidence="1">Amino-acid biosynthesis; L-valine biosynthesis; L-valine from pyruvate: step 3/4.</text>
</comment>
<comment type="subunit">
    <text evidence="1">Homodimer.</text>
</comment>
<comment type="similarity">
    <text evidence="1">Belongs to the IlvD/Edd family.</text>
</comment>
<accession>B2FMH4</accession>
<gene>
    <name evidence="1" type="primary">ilvD</name>
    <name type="ordered locus">Smlt4492</name>
</gene>
<name>ILVD_STRMK</name>
<dbReference type="EC" id="4.2.1.9" evidence="1"/>
<dbReference type="EMBL" id="AM743169">
    <property type="protein sequence ID" value="CAQ47849.1"/>
    <property type="molecule type" value="Genomic_DNA"/>
</dbReference>
<dbReference type="RefSeq" id="WP_012481555.1">
    <property type="nucleotide sequence ID" value="NC_010943.1"/>
</dbReference>
<dbReference type="SMR" id="B2FMH4"/>
<dbReference type="EnsemblBacteria" id="CAQ47849">
    <property type="protein sequence ID" value="CAQ47849"/>
    <property type="gene ID" value="Smlt4492"/>
</dbReference>
<dbReference type="KEGG" id="sml:Smlt4492"/>
<dbReference type="PATRIC" id="fig|522373.3.peg.4230"/>
<dbReference type="eggNOG" id="COG0129">
    <property type="taxonomic scope" value="Bacteria"/>
</dbReference>
<dbReference type="HOGENOM" id="CLU_014271_4_2_6"/>
<dbReference type="UniPathway" id="UPA00047">
    <property type="reaction ID" value="UER00057"/>
</dbReference>
<dbReference type="UniPathway" id="UPA00049">
    <property type="reaction ID" value="UER00061"/>
</dbReference>
<dbReference type="Proteomes" id="UP000008840">
    <property type="component" value="Chromosome"/>
</dbReference>
<dbReference type="GO" id="GO:0005829">
    <property type="term" value="C:cytosol"/>
    <property type="evidence" value="ECO:0007669"/>
    <property type="project" value="TreeGrafter"/>
</dbReference>
<dbReference type="GO" id="GO:0051537">
    <property type="term" value="F:2 iron, 2 sulfur cluster binding"/>
    <property type="evidence" value="ECO:0007669"/>
    <property type="project" value="UniProtKB-UniRule"/>
</dbReference>
<dbReference type="GO" id="GO:0004160">
    <property type="term" value="F:dihydroxy-acid dehydratase activity"/>
    <property type="evidence" value="ECO:0007669"/>
    <property type="project" value="UniProtKB-UniRule"/>
</dbReference>
<dbReference type="GO" id="GO:0000287">
    <property type="term" value="F:magnesium ion binding"/>
    <property type="evidence" value="ECO:0007669"/>
    <property type="project" value="UniProtKB-UniRule"/>
</dbReference>
<dbReference type="GO" id="GO:0009097">
    <property type="term" value="P:isoleucine biosynthetic process"/>
    <property type="evidence" value="ECO:0007669"/>
    <property type="project" value="UniProtKB-UniRule"/>
</dbReference>
<dbReference type="GO" id="GO:0009099">
    <property type="term" value="P:L-valine biosynthetic process"/>
    <property type="evidence" value="ECO:0007669"/>
    <property type="project" value="UniProtKB-UniRule"/>
</dbReference>
<dbReference type="FunFam" id="3.50.30.80:FF:000001">
    <property type="entry name" value="Dihydroxy-acid dehydratase"/>
    <property type="match status" value="1"/>
</dbReference>
<dbReference type="Gene3D" id="3.50.30.80">
    <property type="entry name" value="IlvD/EDD C-terminal domain-like"/>
    <property type="match status" value="1"/>
</dbReference>
<dbReference type="HAMAP" id="MF_00012">
    <property type="entry name" value="IlvD"/>
    <property type="match status" value="1"/>
</dbReference>
<dbReference type="InterPro" id="IPR042096">
    <property type="entry name" value="Dihydro-acid_dehy_C"/>
</dbReference>
<dbReference type="InterPro" id="IPR004404">
    <property type="entry name" value="DihydroxyA_deHydtase"/>
</dbReference>
<dbReference type="InterPro" id="IPR020558">
    <property type="entry name" value="DiOHA_6PGluconate_deHydtase_CS"/>
</dbReference>
<dbReference type="InterPro" id="IPR056740">
    <property type="entry name" value="ILV_EDD_C"/>
</dbReference>
<dbReference type="InterPro" id="IPR000581">
    <property type="entry name" value="ILV_EDD_N"/>
</dbReference>
<dbReference type="InterPro" id="IPR037237">
    <property type="entry name" value="IlvD/EDD_N"/>
</dbReference>
<dbReference type="NCBIfam" id="TIGR00110">
    <property type="entry name" value="ilvD"/>
    <property type="match status" value="1"/>
</dbReference>
<dbReference type="NCBIfam" id="NF009103">
    <property type="entry name" value="PRK12448.1"/>
    <property type="match status" value="1"/>
</dbReference>
<dbReference type="PANTHER" id="PTHR43661">
    <property type="entry name" value="D-XYLONATE DEHYDRATASE"/>
    <property type="match status" value="1"/>
</dbReference>
<dbReference type="PANTHER" id="PTHR43661:SF3">
    <property type="entry name" value="D-XYLONATE DEHYDRATASE YAGF-RELATED"/>
    <property type="match status" value="1"/>
</dbReference>
<dbReference type="Pfam" id="PF24877">
    <property type="entry name" value="ILV_EDD_C"/>
    <property type="match status" value="1"/>
</dbReference>
<dbReference type="Pfam" id="PF00920">
    <property type="entry name" value="ILVD_EDD_N"/>
    <property type="match status" value="1"/>
</dbReference>
<dbReference type="SUPFAM" id="SSF143975">
    <property type="entry name" value="IlvD/EDD N-terminal domain-like"/>
    <property type="match status" value="1"/>
</dbReference>
<dbReference type="SUPFAM" id="SSF52016">
    <property type="entry name" value="LeuD/IlvD-like"/>
    <property type="match status" value="1"/>
</dbReference>
<dbReference type="PROSITE" id="PS00886">
    <property type="entry name" value="ILVD_EDD_1"/>
    <property type="match status" value="1"/>
</dbReference>
<dbReference type="PROSITE" id="PS00887">
    <property type="entry name" value="ILVD_EDD_2"/>
    <property type="match status" value="1"/>
</dbReference>
<feature type="chain" id="PRO_1000089418" description="Dihydroxy-acid dehydratase">
    <location>
        <begin position="1"/>
        <end position="612"/>
    </location>
</feature>
<feature type="active site" description="Proton acceptor" evidence="1">
    <location>
        <position position="515"/>
    </location>
</feature>
<feature type="binding site" evidence="1">
    <location>
        <position position="81"/>
    </location>
    <ligand>
        <name>Mg(2+)</name>
        <dbReference type="ChEBI" id="CHEBI:18420"/>
    </ligand>
</feature>
<feature type="binding site" evidence="1">
    <location>
        <position position="122"/>
    </location>
    <ligand>
        <name>[2Fe-2S] cluster</name>
        <dbReference type="ChEBI" id="CHEBI:190135"/>
    </ligand>
</feature>
<feature type="binding site" evidence="1">
    <location>
        <position position="123"/>
    </location>
    <ligand>
        <name>Mg(2+)</name>
        <dbReference type="ChEBI" id="CHEBI:18420"/>
    </ligand>
</feature>
<feature type="binding site" description="via carbamate group" evidence="1">
    <location>
        <position position="124"/>
    </location>
    <ligand>
        <name>Mg(2+)</name>
        <dbReference type="ChEBI" id="CHEBI:18420"/>
    </ligand>
</feature>
<feature type="binding site" evidence="1">
    <location>
        <position position="193"/>
    </location>
    <ligand>
        <name>[2Fe-2S] cluster</name>
        <dbReference type="ChEBI" id="CHEBI:190135"/>
    </ligand>
</feature>
<feature type="binding site" evidence="1">
    <location>
        <position position="489"/>
    </location>
    <ligand>
        <name>Mg(2+)</name>
        <dbReference type="ChEBI" id="CHEBI:18420"/>
    </ligand>
</feature>
<feature type="modified residue" description="N6-carboxylysine" evidence="1">
    <location>
        <position position="124"/>
    </location>
</feature>
<protein>
    <recommendedName>
        <fullName evidence="1">Dihydroxy-acid dehydratase</fullName>
        <shortName evidence="1">DAD</shortName>
        <ecNumber evidence="1">4.2.1.9</ecNumber>
    </recommendedName>
</protein>
<proteinExistence type="inferred from homology"/>
<evidence type="ECO:0000255" key="1">
    <source>
        <dbReference type="HAMAP-Rule" id="MF_00012"/>
    </source>
</evidence>